<name>CARB_HALER</name>
<comment type="function">
    <text evidence="1">Large subunit of the glutamine-dependent carbamoyl phosphate synthetase (CPSase). CPSase catalyzes the formation of carbamoyl phosphate from the ammonia moiety of glutamine, carbonate, and phosphate donated by ATP, constituting the first step of 2 biosynthetic pathways, one leading to arginine and/or urea and the other to pyrimidine nucleotides. The large subunit (synthetase) binds the substrates ammonia (free or transferred from glutamine from the small subunit), hydrogencarbonate and ATP and carries out an ATP-coupled ligase reaction, activating hydrogencarbonate by forming carboxy phosphate which reacts with ammonia to form carbamoyl phosphate.</text>
</comment>
<comment type="catalytic activity">
    <reaction evidence="1">
        <text>hydrogencarbonate + L-glutamine + 2 ATP + H2O = carbamoyl phosphate + L-glutamate + 2 ADP + phosphate + 2 H(+)</text>
        <dbReference type="Rhea" id="RHEA:18633"/>
        <dbReference type="ChEBI" id="CHEBI:15377"/>
        <dbReference type="ChEBI" id="CHEBI:15378"/>
        <dbReference type="ChEBI" id="CHEBI:17544"/>
        <dbReference type="ChEBI" id="CHEBI:29985"/>
        <dbReference type="ChEBI" id="CHEBI:30616"/>
        <dbReference type="ChEBI" id="CHEBI:43474"/>
        <dbReference type="ChEBI" id="CHEBI:58228"/>
        <dbReference type="ChEBI" id="CHEBI:58359"/>
        <dbReference type="ChEBI" id="CHEBI:456216"/>
        <dbReference type="EC" id="6.3.5.5"/>
    </reaction>
</comment>
<comment type="catalytic activity">
    <molecule>Carbamoyl phosphate synthase large chain</molecule>
    <reaction evidence="1">
        <text>hydrogencarbonate + NH4(+) + 2 ATP = carbamoyl phosphate + 2 ADP + phosphate + 2 H(+)</text>
        <dbReference type="Rhea" id="RHEA:18029"/>
        <dbReference type="ChEBI" id="CHEBI:15378"/>
        <dbReference type="ChEBI" id="CHEBI:17544"/>
        <dbReference type="ChEBI" id="CHEBI:28938"/>
        <dbReference type="ChEBI" id="CHEBI:30616"/>
        <dbReference type="ChEBI" id="CHEBI:43474"/>
        <dbReference type="ChEBI" id="CHEBI:58228"/>
        <dbReference type="ChEBI" id="CHEBI:456216"/>
        <dbReference type="EC" id="6.3.4.16"/>
    </reaction>
</comment>
<comment type="cofactor">
    <cofactor evidence="1">
        <name>Mg(2+)</name>
        <dbReference type="ChEBI" id="CHEBI:18420"/>
    </cofactor>
    <cofactor evidence="1">
        <name>Mn(2+)</name>
        <dbReference type="ChEBI" id="CHEBI:29035"/>
    </cofactor>
    <text evidence="1">Binds 4 Mg(2+) or Mn(2+) ions per subunit.</text>
</comment>
<comment type="pathway">
    <text evidence="1">Amino-acid biosynthesis; L-arginine biosynthesis; carbamoyl phosphate from bicarbonate: step 1/1.</text>
</comment>
<comment type="pathway">
    <text evidence="1">Pyrimidine metabolism; UMP biosynthesis via de novo pathway; (S)-dihydroorotate from bicarbonate: step 1/3.</text>
</comment>
<comment type="subunit">
    <text evidence="1">Composed of two chains; the small (or glutamine) chain promotes the hydrolysis of glutamine to ammonia, which is used by the large (or ammonia) chain to synthesize carbamoyl phosphate. Tetramer of heterodimers (alpha,beta)4.</text>
</comment>
<comment type="domain">
    <text evidence="1">The large subunit is composed of 2 ATP-grasp domains that are involved in binding the 2 ATP molecules needed for carbamoyl phosphate synthesis. The N-terminal ATP-grasp domain (referred to as the carboxyphosphate synthetic component) catalyzes the ATP-dependent phosphorylation of hydrogencarbonate to carboxyphosphate and the subsequent nucleophilic attack by ammonia to form a carbamate intermediate. The C-terminal ATP-grasp domain (referred to as the carbamoyl phosphate synthetic component) then catalyzes the phosphorylation of carbamate with the second ATP to form the end product carbamoyl phosphate. The reactive and unstable enzyme intermediates are sequentially channeled from one active site to the next through the interior of the protein over a distance of at least 96 A.</text>
</comment>
<comment type="similarity">
    <text evidence="1">Belongs to the CarB family.</text>
</comment>
<reference key="1">
    <citation type="journal article" date="2003" name="Extremophiles">
        <title>Identification and characterization of the carAB genes responsible for encoding carbamoylphosphate synthetase in Halomonas eurihalina.</title>
        <authorList>
            <person name="Llamas I."/>
            <person name="Suarez A."/>
            <person name="Quesada E."/>
            <person name="Bejar V."/>
            <person name="del Moral A."/>
        </authorList>
    </citation>
    <scope>NUCLEOTIDE SEQUENCE [GENOMIC DNA]</scope>
    <source>
        <strain>F2-7</strain>
    </source>
</reference>
<keyword id="KW-0028">Amino-acid biosynthesis</keyword>
<keyword id="KW-0055">Arginine biosynthesis</keyword>
<keyword id="KW-0067">ATP-binding</keyword>
<keyword id="KW-0436">Ligase</keyword>
<keyword id="KW-0460">Magnesium</keyword>
<keyword id="KW-0464">Manganese</keyword>
<keyword id="KW-0479">Metal-binding</keyword>
<keyword id="KW-0547">Nucleotide-binding</keyword>
<keyword id="KW-0665">Pyrimidine biosynthesis</keyword>
<keyword id="KW-0677">Repeat</keyword>
<evidence type="ECO:0000255" key="1">
    <source>
        <dbReference type="HAMAP-Rule" id="MF_01210"/>
    </source>
</evidence>
<proteinExistence type="inferred from homology"/>
<feature type="chain" id="PRO_0000145009" description="Carbamoyl phosphate synthase large chain">
    <location>
        <begin position="1"/>
        <end position="1076"/>
    </location>
</feature>
<feature type="domain" description="ATP-grasp 1" evidence="1">
    <location>
        <begin position="133"/>
        <end position="328"/>
    </location>
</feature>
<feature type="domain" description="ATP-grasp 2" evidence="1">
    <location>
        <begin position="678"/>
        <end position="869"/>
    </location>
</feature>
<feature type="domain" description="MGS-like" evidence="1">
    <location>
        <begin position="936"/>
        <end position="1076"/>
    </location>
</feature>
<feature type="region of interest" description="Carboxyphosphate synthetic domain" evidence="1">
    <location>
        <begin position="1"/>
        <end position="403"/>
    </location>
</feature>
<feature type="region of interest" description="Oligomerization domain" evidence="1">
    <location>
        <begin position="404"/>
        <end position="553"/>
    </location>
</feature>
<feature type="region of interest" description="Carbamoyl phosphate synthetic domain" evidence="1">
    <location>
        <begin position="554"/>
        <end position="935"/>
    </location>
</feature>
<feature type="region of interest" description="Allosteric domain" evidence="1">
    <location>
        <begin position="936"/>
        <end position="1076"/>
    </location>
</feature>
<feature type="binding site" evidence="1">
    <location>
        <position position="129"/>
    </location>
    <ligand>
        <name>ATP</name>
        <dbReference type="ChEBI" id="CHEBI:30616"/>
        <label>1</label>
    </ligand>
</feature>
<feature type="binding site" evidence="1">
    <location>
        <position position="169"/>
    </location>
    <ligand>
        <name>ATP</name>
        <dbReference type="ChEBI" id="CHEBI:30616"/>
        <label>1</label>
    </ligand>
</feature>
<feature type="binding site" evidence="1">
    <location>
        <position position="175"/>
    </location>
    <ligand>
        <name>ATP</name>
        <dbReference type="ChEBI" id="CHEBI:30616"/>
        <label>1</label>
    </ligand>
</feature>
<feature type="binding site" evidence="1">
    <location>
        <position position="176"/>
    </location>
    <ligand>
        <name>ATP</name>
        <dbReference type="ChEBI" id="CHEBI:30616"/>
        <label>1</label>
    </ligand>
</feature>
<feature type="binding site" evidence="1">
    <location>
        <position position="208"/>
    </location>
    <ligand>
        <name>ATP</name>
        <dbReference type="ChEBI" id="CHEBI:30616"/>
        <label>1</label>
    </ligand>
</feature>
<feature type="binding site" evidence="1">
    <location>
        <position position="210"/>
    </location>
    <ligand>
        <name>ATP</name>
        <dbReference type="ChEBI" id="CHEBI:30616"/>
        <label>1</label>
    </ligand>
</feature>
<feature type="binding site" evidence="1">
    <location>
        <position position="215"/>
    </location>
    <ligand>
        <name>ATP</name>
        <dbReference type="ChEBI" id="CHEBI:30616"/>
        <label>1</label>
    </ligand>
</feature>
<feature type="binding site" evidence="1">
    <location>
        <position position="241"/>
    </location>
    <ligand>
        <name>ATP</name>
        <dbReference type="ChEBI" id="CHEBI:30616"/>
        <label>1</label>
    </ligand>
</feature>
<feature type="binding site" evidence="1">
    <location>
        <position position="242"/>
    </location>
    <ligand>
        <name>ATP</name>
        <dbReference type="ChEBI" id="CHEBI:30616"/>
        <label>1</label>
    </ligand>
</feature>
<feature type="binding site" evidence="1">
    <location>
        <position position="243"/>
    </location>
    <ligand>
        <name>ATP</name>
        <dbReference type="ChEBI" id="CHEBI:30616"/>
        <label>1</label>
    </ligand>
</feature>
<feature type="binding site" evidence="1">
    <location>
        <position position="285"/>
    </location>
    <ligand>
        <name>ATP</name>
        <dbReference type="ChEBI" id="CHEBI:30616"/>
        <label>1</label>
    </ligand>
</feature>
<feature type="binding site" evidence="1">
    <location>
        <position position="285"/>
    </location>
    <ligand>
        <name>Mg(2+)</name>
        <dbReference type="ChEBI" id="CHEBI:18420"/>
        <label>1</label>
    </ligand>
</feature>
<feature type="binding site" evidence="1">
    <location>
        <position position="285"/>
    </location>
    <ligand>
        <name>Mn(2+)</name>
        <dbReference type="ChEBI" id="CHEBI:29035"/>
        <label>1</label>
    </ligand>
</feature>
<feature type="binding site" evidence="1">
    <location>
        <position position="299"/>
    </location>
    <ligand>
        <name>ATP</name>
        <dbReference type="ChEBI" id="CHEBI:30616"/>
        <label>1</label>
    </ligand>
</feature>
<feature type="binding site" evidence="1">
    <location>
        <position position="299"/>
    </location>
    <ligand>
        <name>Mg(2+)</name>
        <dbReference type="ChEBI" id="CHEBI:18420"/>
        <label>1</label>
    </ligand>
</feature>
<feature type="binding site" evidence="1">
    <location>
        <position position="299"/>
    </location>
    <ligand>
        <name>Mg(2+)</name>
        <dbReference type="ChEBI" id="CHEBI:18420"/>
        <label>2</label>
    </ligand>
</feature>
<feature type="binding site" evidence="1">
    <location>
        <position position="299"/>
    </location>
    <ligand>
        <name>Mn(2+)</name>
        <dbReference type="ChEBI" id="CHEBI:29035"/>
        <label>1</label>
    </ligand>
</feature>
<feature type="binding site" evidence="1">
    <location>
        <position position="299"/>
    </location>
    <ligand>
        <name>Mn(2+)</name>
        <dbReference type="ChEBI" id="CHEBI:29035"/>
        <label>2</label>
    </ligand>
</feature>
<feature type="binding site" evidence="1">
    <location>
        <position position="301"/>
    </location>
    <ligand>
        <name>Mg(2+)</name>
        <dbReference type="ChEBI" id="CHEBI:18420"/>
        <label>2</label>
    </ligand>
</feature>
<feature type="binding site" evidence="1">
    <location>
        <position position="301"/>
    </location>
    <ligand>
        <name>Mn(2+)</name>
        <dbReference type="ChEBI" id="CHEBI:29035"/>
        <label>2</label>
    </ligand>
</feature>
<feature type="binding site" evidence="1">
    <location>
        <position position="714"/>
    </location>
    <ligand>
        <name>ATP</name>
        <dbReference type="ChEBI" id="CHEBI:30616"/>
        <label>2</label>
    </ligand>
</feature>
<feature type="binding site" evidence="1">
    <location>
        <position position="753"/>
    </location>
    <ligand>
        <name>ATP</name>
        <dbReference type="ChEBI" id="CHEBI:30616"/>
        <label>2</label>
    </ligand>
</feature>
<feature type="binding site" evidence="1">
    <location>
        <position position="755"/>
    </location>
    <ligand>
        <name>ATP</name>
        <dbReference type="ChEBI" id="CHEBI:30616"/>
        <label>2</label>
    </ligand>
</feature>
<feature type="binding site" evidence="1">
    <location>
        <position position="760"/>
    </location>
    <ligand>
        <name>ATP</name>
        <dbReference type="ChEBI" id="CHEBI:30616"/>
        <label>2</label>
    </ligand>
</feature>
<feature type="binding site" evidence="1">
    <location>
        <position position="785"/>
    </location>
    <ligand>
        <name>ATP</name>
        <dbReference type="ChEBI" id="CHEBI:30616"/>
        <label>2</label>
    </ligand>
</feature>
<feature type="binding site" evidence="1">
    <location>
        <position position="786"/>
    </location>
    <ligand>
        <name>ATP</name>
        <dbReference type="ChEBI" id="CHEBI:30616"/>
        <label>2</label>
    </ligand>
</feature>
<feature type="binding site" evidence="1">
    <location>
        <position position="787"/>
    </location>
    <ligand>
        <name>ATP</name>
        <dbReference type="ChEBI" id="CHEBI:30616"/>
        <label>2</label>
    </ligand>
</feature>
<feature type="binding site" evidence="1">
    <location>
        <position position="788"/>
    </location>
    <ligand>
        <name>ATP</name>
        <dbReference type="ChEBI" id="CHEBI:30616"/>
        <label>2</label>
    </ligand>
</feature>
<feature type="binding site" evidence="1">
    <location>
        <position position="828"/>
    </location>
    <ligand>
        <name>ATP</name>
        <dbReference type="ChEBI" id="CHEBI:30616"/>
        <label>2</label>
    </ligand>
</feature>
<feature type="binding site" evidence="1">
    <location>
        <position position="828"/>
    </location>
    <ligand>
        <name>Mg(2+)</name>
        <dbReference type="ChEBI" id="CHEBI:18420"/>
        <label>3</label>
    </ligand>
</feature>
<feature type="binding site" evidence="1">
    <location>
        <position position="828"/>
    </location>
    <ligand>
        <name>Mn(2+)</name>
        <dbReference type="ChEBI" id="CHEBI:29035"/>
        <label>3</label>
    </ligand>
</feature>
<feature type="binding site" evidence="1">
    <location>
        <position position="840"/>
    </location>
    <ligand>
        <name>ATP</name>
        <dbReference type="ChEBI" id="CHEBI:30616"/>
        <label>2</label>
    </ligand>
</feature>
<feature type="binding site" evidence="1">
    <location>
        <position position="840"/>
    </location>
    <ligand>
        <name>Mg(2+)</name>
        <dbReference type="ChEBI" id="CHEBI:18420"/>
        <label>3</label>
    </ligand>
</feature>
<feature type="binding site" evidence="1">
    <location>
        <position position="840"/>
    </location>
    <ligand>
        <name>Mg(2+)</name>
        <dbReference type="ChEBI" id="CHEBI:18420"/>
        <label>4</label>
    </ligand>
</feature>
<feature type="binding site" evidence="1">
    <location>
        <position position="840"/>
    </location>
    <ligand>
        <name>Mn(2+)</name>
        <dbReference type="ChEBI" id="CHEBI:29035"/>
        <label>3</label>
    </ligand>
</feature>
<feature type="binding site" evidence="1">
    <location>
        <position position="840"/>
    </location>
    <ligand>
        <name>Mn(2+)</name>
        <dbReference type="ChEBI" id="CHEBI:29035"/>
        <label>4</label>
    </ligand>
</feature>
<feature type="binding site" evidence="1">
    <location>
        <position position="842"/>
    </location>
    <ligand>
        <name>Mg(2+)</name>
        <dbReference type="ChEBI" id="CHEBI:18420"/>
        <label>4</label>
    </ligand>
</feature>
<feature type="binding site" evidence="1">
    <location>
        <position position="842"/>
    </location>
    <ligand>
        <name>Mn(2+)</name>
        <dbReference type="ChEBI" id="CHEBI:29035"/>
        <label>4</label>
    </ligand>
</feature>
<dbReference type="EC" id="6.3.4.16" evidence="1"/>
<dbReference type="EC" id="6.3.5.5" evidence="1"/>
<dbReference type="EMBL" id="AJ431666">
    <property type="protein sequence ID" value="CAD24315.1"/>
    <property type="molecule type" value="Genomic_DNA"/>
</dbReference>
<dbReference type="BRENDA" id="6.3.5.5">
    <property type="organism ID" value="7241"/>
</dbReference>
<dbReference type="UniPathway" id="UPA00068">
    <property type="reaction ID" value="UER00171"/>
</dbReference>
<dbReference type="UniPathway" id="UPA00070">
    <property type="reaction ID" value="UER00115"/>
</dbReference>
<dbReference type="GO" id="GO:0005737">
    <property type="term" value="C:cytoplasm"/>
    <property type="evidence" value="ECO:0007669"/>
    <property type="project" value="TreeGrafter"/>
</dbReference>
<dbReference type="GO" id="GO:0005524">
    <property type="term" value="F:ATP binding"/>
    <property type="evidence" value="ECO:0007669"/>
    <property type="project" value="UniProtKB-UniRule"/>
</dbReference>
<dbReference type="GO" id="GO:0004087">
    <property type="term" value="F:carbamoyl-phosphate synthase (ammonia) activity"/>
    <property type="evidence" value="ECO:0007669"/>
    <property type="project" value="RHEA"/>
</dbReference>
<dbReference type="GO" id="GO:0004088">
    <property type="term" value="F:carbamoyl-phosphate synthase (glutamine-hydrolyzing) activity"/>
    <property type="evidence" value="ECO:0007669"/>
    <property type="project" value="UniProtKB-UniRule"/>
</dbReference>
<dbReference type="GO" id="GO:0046872">
    <property type="term" value="F:metal ion binding"/>
    <property type="evidence" value="ECO:0007669"/>
    <property type="project" value="UniProtKB-KW"/>
</dbReference>
<dbReference type="GO" id="GO:0044205">
    <property type="term" value="P:'de novo' UMP biosynthetic process"/>
    <property type="evidence" value="ECO:0007669"/>
    <property type="project" value="UniProtKB-UniRule"/>
</dbReference>
<dbReference type="GO" id="GO:0006541">
    <property type="term" value="P:glutamine metabolic process"/>
    <property type="evidence" value="ECO:0007669"/>
    <property type="project" value="TreeGrafter"/>
</dbReference>
<dbReference type="GO" id="GO:0006526">
    <property type="term" value="P:L-arginine biosynthetic process"/>
    <property type="evidence" value="ECO:0007669"/>
    <property type="project" value="UniProtKB-UniRule"/>
</dbReference>
<dbReference type="CDD" id="cd01424">
    <property type="entry name" value="MGS_CPS_II"/>
    <property type="match status" value="1"/>
</dbReference>
<dbReference type="FunFam" id="1.10.1030.10:FF:000002">
    <property type="entry name" value="Carbamoyl-phosphate synthase large chain"/>
    <property type="match status" value="1"/>
</dbReference>
<dbReference type="FunFam" id="3.30.1490.20:FF:000001">
    <property type="entry name" value="Carbamoyl-phosphate synthase large chain"/>
    <property type="match status" value="1"/>
</dbReference>
<dbReference type="FunFam" id="3.30.470.20:FF:000007">
    <property type="entry name" value="Carbamoyl-phosphate synthase large chain"/>
    <property type="match status" value="1"/>
</dbReference>
<dbReference type="FunFam" id="3.30.470.20:FF:000013">
    <property type="entry name" value="Carbamoyl-phosphate synthase large chain"/>
    <property type="match status" value="1"/>
</dbReference>
<dbReference type="FunFam" id="3.40.50.20:FF:000001">
    <property type="entry name" value="Carbamoyl-phosphate synthase large chain"/>
    <property type="match status" value="1"/>
</dbReference>
<dbReference type="FunFam" id="3.40.50.20:FF:000003">
    <property type="entry name" value="Carbamoyl-phosphate synthase large chain"/>
    <property type="match status" value="1"/>
</dbReference>
<dbReference type="Gene3D" id="3.40.50.20">
    <property type="match status" value="2"/>
</dbReference>
<dbReference type="Gene3D" id="3.30.470.20">
    <property type="entry name" value="ATP-grasp fold, B domain"/>
    <property type="match status" value="2"/>
</dbReference>
<dbReference type="Gene3D" id="1.10.1030.10">
    <property type="entry name" value="Carbamoyl-phosphate synthetase, large subunit oligomerisation domain"/>
    <property type="match status" value="1"/>
</dbReference>
<dbReference type="Gene3D" id="3.40.50.1380">
    <property type="entry name" value="Methylglyoxal synthase-like domain"/>
    <property type="match status" value="1"/>
</dbReference>
<dbReference type="HAMAP" id="MF_01210_A">
    <property type="entry name" value="CPSase_L_chain_A"/>
    <property type="match status" value="1"/>
</dbReference>
<dbReference type="HAMAP" id="MF_01210_B">
    <property type="entry name" value="CPSase_L_chain_B"/>
    <property type="match status" value="1"/>
</dbReference>
<dbReference type="InterPro" id="IPR011761">
    <property type="entry name" value="ATP-grasp"/>
</dbReference>
<dbReference type="InterPro" id="IPR006275">
    <property type="entry name" value="CarbamoylP_synth_lsu"/>
</dbReference>
<dbReference type="InterPro" id="IPR005480">
    <property type="entry name" value="CarbamoylP_synth_lsu_oligo"/>
</dbReference>
<dbReference type="InterPro" id="IPR036897">
    <property type="entry name" value="CarbamoylP_synth_lsu_oligo_sf"/>
</dbReference>
<dbReference type="InterPro" id="IPR005479">
    <property type="entry name" value="CbamoylP_synth_lsu-like_ATP-bd"/>
</dbReference>
<dbReference type="InterPro" id="IPR005483">
    <property type="entry name" value="CbamoylP_synth_lsu_CPSase_dom"/>
</dbReference>
<dbReference type="InterPro" id="IPR011607">
    <property type="entry name" value="MGS-like_dom"/>
</dbReference>
<dbReference type="InterPro" id="IPR036914">
    <property type="entry name" value="MGS-like_dom_sf"/>
</dbReference>
<dbReference type="InterPro" id="IPR033937">
    <property type="entry name" value="MGS_CPS_CarB"/>
</dbReference>
<dbReference type="InterPro" id="IPR016185">
    <property type="entry name" value="PreATP-grasp_dom_sf"/>
</dbReference>
<dbReference type="NCBIfam" id="TIGR01369">
    <property type="entry name" value="CPSaseII_lrg"/>
    <property type="match status" value="1"/>
</dbReference>
<dbReference type="NCBIfam" id="NF003671">
    <property type="entry name" value="PRK05294.1"/>
    <property type="match status" value="1"/>
</dbReference>
<dbReference type="NCBIfam" id="NF009455">
    <property type="entry name" value="PRK12815.1"/>
    <property type="match status" value="1"/>
</dbReference>
<dbReference type="PANTHER" id="PTHR11405:SF53">
    <property type="entry name" value="CARBAMOYL-PHOSPHATE SYNTHASE [AMMONIA], MITOCHONDRIAL"/>
    <property type="match status" value="1"/>
</dbReference>
<dbReference type="PANTHER" id="PTHR11405">
    <property type="entry name" value="CARBAMOYLTRANSFERASE FAMILY MEMBER"/>
    <property type="match status" value="1"/>
</dbReference>
<dbReference type="Pfam" id="PF02786">
    <property type="entry name" value="CPSase_L_D2"/>
    <property type="match status" value="2"/>
</dbReference>
<dbReference type="Pfam" id="PF02787">
    <property type="entry name" value="CPSase_L_D3"/>
    <property type="match status" value="1"/>
</dbReference>
<dbReference type="Pfam" id="PF02142">
    <property type="entry name" value="MGS"/>
    <property type="match status" value="1"/>
</dbReference>
<dbReference type="PRINTS" id="PR00098">
    <property type="entry name" value="CPSASE"/>
</dbReference>
<dbReference type="SMART" id="SM01096">
    <property type="entry name" value="CPSase_L_D3"/>
    <property type="match status" value="1"/>
</dbReference>
<dbReference type="SMART" id="SM00851">
    <property type="entry name" value="MGS"/>
    <property type="match status" value="1"/>
</dbReference>
<dbReference type="SUPFAM" id="SSF48108">
    <property type="entry name" value="Carbamoyl phosphate synthetase, large subunit connection domain"/>
    <property type="match status" value="1"/>
</dbReference>
<dbReference type="SUPFAM" id="SSF56059">
    <property type="entry name" value="Glutathione synthetase ATP-binding domain-like"/>
    <property type="match status" value="2"/>
</dbReference>
<dbReference type="SUPFAM" id="SSF52335">
    <property type="entry name" value="Methylglyoxal synthase-like"/>
    <property type="match status" value="1"/>
</dbReference>
<dbReference type="SUPFAM" id="SSF52440">
    <property type="entry name" value="PreATP-grasp domain"/>
    <property type="match status" value="2"/>
</dbReference>
<dbReference type="PROSITE" id="PS50975">
    <property type="entry name" value="ATP_GRASP"/>
    <property type="match status" value="2"/>
</dbReference>
<dbReference type="PROSITE" id="PS00866">
    <property type="entry name" value="CPSASE_1"/>
    <property type="match status" value="2"/>
</dbReference>
<dbReference type="PROSITE" id="PS00867">
    <property type="entry name" value="CPSASE_2"/>
    <property type="match status" value="2"/>
</dbReference>
<dbReference type="PROSITE" id="PS51855">
    <property type="entry name" value="MGS"/>
    <property type="match status" value="1"/>
</dbReference>
<organism>
    <name type="scientific">Halomonas eurihalina</name>
    <dbReference type="NCBI Taxonomy" id="42566"/>
    <lineage>
        <taxon>Bacteria</taxon>
        <taxon>Pseudomonadati</taxon>
        <taxon>Pseudomonadota</taxon>
        <taxon>Gammaproteobacteria</taxon>
        <taxon>Oceanospirillales</taxon>
        <taxon>Halomonadaceae</taxon>
        <taxon>Halomonas</taxon>
    </lineage>
</organism>
<sequence length="1076" mass="117218">MPKRTDIQSILIIGAGPIVIGQACEFDYSGAQACKALREEGFRVILVNSNPATIMTDPVMADATYIEPITWQAVEKIIEAERPDAVLPTMGGQTALNCALDLDKHGVLEKFGVEMIGANADAINMAEDRDLFDQAMKRIGLECPKAKVAHSMDEAWQIQSELGFPVIIRPSYTMGGSGGGVAYNKEEFEEICTRGFELSNNHELLIDESLLGWKEYEMEVVRDKNDNCIIVCAIENFDPMGVHTGDSITVAPAQTLTDKEYQNMRDASLAVLREIGVETGGSNVQFGVDPDTGRVVVIEMNPRVSRSSALASKATGFPIAKIAAKLAVGYTLDELSNDITGGRTPASFEPSIDYVVTKIPRFTFEKFPQANDRLTTQMKSVGEVMAIGRTFQESLQKALRGLETGNDGLDPKVTRFNDDGMAHIKGELQVAGAERIFYVADAMRAGLSVEELFRLTNIDRWFLVQLEDLVRTEAELAKRSLSELTPRELFALKRKGFSDARLAGLLGVAEKDFRRTRQAAGIRPVYKRVDTCAAEFATDTAYMYSSYEEECEAEVSDRPKIMVLGGGPNRIGQGIEFDYCCVHAALAMRDDGYETIMVNCNPETVSTDYDTSDRLYFEPVTLEDVLEIADKEKPAGVIVQFGGQTPLKLARELEAAGVPIIGTTPDAIDRAEDRERFQHMVDKLGLKQPANATARSXEEAFAKAEAIGYPXVVRPSYVLGGXAMEIVYDASELENYMTHAVKVSNDSPVLLDHFLNCAIEVDIDAVSDGHQVVIGGIMQHIEQAGVHSGDSACALPPYSLPAEVQDEMRDQVKRMAVELGVKGLMNVQLAWQDGEIYVIEVNPRASRTVPFVSKCVGTSLAQVAARCMAGISLAEQGFVEEIVPHFYSVKEAVFPFAKFPGVDPILSPEMKSTGEVMGSGDTFAEAFYKAQLGAGEAIPALEGERKAFLSVRDPDKQGVIDVARSLLGLGFTLCATRGTASALQQAGLPVDVVNKVYEGRPHXVDLLKNDXVAYIVNTTEGRQAINDSSVIRRTALARKVPYATTLAGANAVCLALEYGNAITVRRLQELHAGVSQ</sequence>
<gene>
    <name evidence="1" type="primary">carB</name>
</gene>
<accession>Q8RSS3</accession>
<protein>
    <recommendedName>
        <fullName evidence="1">Carbamoyl phosphate synthase large chain</fullName>
        <ecNumber evidence="1">6.3.4.16</ecNumber>
        <ecNumber evidence="1">6.3.5.5</ecNumber>
    </recommendedName>
    <alternativeName>
        <fullName evidence="1">Carbamoyl phosphate synthetase ammonia chain</fullName>
    </alternativeName>
</protein>